<comment type="function">
    <text evidence="1">Catalyzes the condensation of isopentenyl diphosphate (IPP) with allylic pyrophosphates generating different type of terpenoids.</text>
</comment>
<comment type="cofactor">
    <cofactor evidence="1">
        <name>Mg(2+)</name>
        <dbReference type="ChEBI" id="CHEBI:18420"/>
    </cofactor>
    <text evidence="1">Binds 2 magnesium ions per subunit.</text>
</comment>
<comment type="subunit">
    <text evidence="1">Homodimer.</text>
</comment>
<comment type="similarity">
    <text evidence="1">Belongs to the UPP synthase family.</text>
</comment>
<evidence type="ECO:0000255" key="1">
    <source>
        <dbReference type="HAMAP-Rule" id="MF_01139"/>
    </source>
</evidence>
<gene>
    <name evidence="1" type="primary">uppS</name>
    <name type="ordered locus">NMA0081</name>
</gene>
<dbReference type="EC" id="2.5.1.-" evidence="1"/>
<dbReference type="EMBL" id="AL157959">
    <property type="protein sequence ID" value="CAM07400.1"/>
    <property type="molecule type" value="Genomic_DNA"/>
</dbReference>
<dbReference type="PIR" id="H81999">
    <property type="entry name" value="H81999"/>
</dbReference>
<dbReference type="RefSeq" id="WP_002246768.1">
    <property type="nucleotide sequence ID" value="NC_003116.1"/>
</dbReference>
<dbReference type="SMR" id="Q9JX35"/>
<dbReference type="EnsemblBacteria" id="CAM07400">
    <property type="protein sequence ID" value="CAM07400"/>
    <property type="gene ID" value="NMA0081"/>
</dbReference>
<dbReference type="KEGG" id="nma:NMA0081"/>
<dbReference type="HOGENOM" id="CLU_038505_1_1_4"/>
<dbReference type="Proteomes" id="UP000000626">
    <property type="component" value="Chromosome"/>
</dbReference>
<dbReference type="GO" id="GO:0005829">
    <property type="term" value="C:cytosol"/>
    <property type="evidence" value="ECO:0007669"/>
    <property type="project" value="TreeGrafter"/>
</dbReference>
<dbReference type="GO" id="GO:0008834">
    <property type="term" value="F:ditrans,polycis-undecaprenyl-diphosphate synthase [(2E,6E)-farnesyl-diphosphate specific] activity"/>
    <property type="evidence" value="ECO:0007669"/>
    <property type="project" value="TreeGrafter"/>
</dbReference>
<dbReference type="GO" id="GO:0000287">
    <property type="term" value="F:magnesium ion binding"/>
    <property type="evidence" value="ECO:0007669"/>
    <property type="project" value="UniProtKB-UniRule"/>
</dbReference>
<dbReference type="GO" id="GO:0016094">
    <property type="term" value="P:polyprenol biosynthetic process"/>
    <property type="evidence" value="ECO:0007669"/>
    <property type="project" value="TreeGrafter"/>
</dbReference>
<dbReference type="CDD" id="cd00475">
    <property type="entry name" value="Cis_IPPS"/>
    <property type="match status" value="1"/>
</dbReference>
<dbReference type="FunFam" id="3.40.1180.10:FF:000001">
    <property type="entry name" value="(2E,6E)-farnesyl-diphosphate-specific ditrans,polycis-undecaprenyl-diphosphate synthase"/>
    <property type="match status" value="1"/>
</dbReference>
<dbReference type="Gene3D" id="3.40.1180.10">
    <property type="entry name" value="Decaprenyl diphosphate synthase-like"/>
    <property type="match status" value="1"/>
</dbReference>
<dbReference type="HAMAP" id="MF_01139">
    <property type="entry name" value="ISPT"/>
    <property type="match status" value="1"/>
</dbReference>
<dbReference type="InterPro" id="IPR001441">
    <property type="entry name" value="UPP_synth-like"/>
</dbReference>
<dbReference type="InterPro" id="IPR018520">
    <property type="entry name" value="UPP_synth-like_CS"/>
</dbReference>
<dbReference type="InterPro" id="IPR036424">
    <property type="entry name" value="UPP_synth-like_sf"/>
</dbReference>
<dbReference type="NCBIfam" id="NF011405">
    <property type="entry name" value="PRK14830.1"/>
    <property type="match status" value="1"/>
</dbReference>
<dbReference type="NCBIfam" id="TIGR00055">
    <property type="entry name" value="uppS"/>
    <property type="match status" value="1"/>
</dbReference>
<dbReference type="PANTHER" id="PTHR10291:SF0">
    <property type="entry name" value="DEHYDRODOLICHYL DIPHOSPHATE SYNTHASE 2"/>
    <property type="match status" value="1"/>
</dbReference>
<dbReference type="PANTHER" id="PTHR10291">
    <property type="entry name" value="DEHYDRODOLICHYL DIPHOSPHATE SYNTHASE FAMILY MEMBER"/>
    <property type="match status" value="1"/>
</dbReference>
<dbReference type="Pfam" id="PF01255">
    <property type="entry name" value="Prenyltransf"/>
    <property type="match status" value="1"/>
</dbReference>
<dbReference type="SUPFAM" id="SSF64005">
    <property type="entry name" value="Undecaprenyl diphosphate synthase"/>
    <property type="match status" value="1"/>
</dbReference>
<dbReference type="PROSITE" id="PS01066">
    <property type="entry name" value="UPP_SYNTHASE"/>
    <property type="match status" value="1"/>
</dbReference>
<sequence>MKSSTQAVLEHTAIPKHIAVIMDGNGRWAKKRFLPRIMGHKRGLDALENMVKHCAKLGVQYLTVFAFSTENWRRPEDEVSFLMGLFLQALQKQVRRLHENNMRLKILGSRERFNRQILKGIEEAEALTANNTGLTLSIAADYGGRWDILQAANKLIAEGVSEITEDTLAKYLMLGDAPEPDLFIRTGGETRISNFLLWQMAYAELYFTDILWPDFDGKALDDAVASFQKRERRFGRTSEQLPIEQQRN</sequence>
<organism>
    <name type="scientific">Neisseria meningitidis serogroup A / serotype 4A (strain DSM 15465 / Z2491)</name>
    <dbReference type="NCBI Taxonomy" id="122587"/>
    <lineage>
        <taxon>Bacteria</taxon>
        <taxon>Pseudomonadati</taxon>
        <taxon>Pseudomonadota</taxon>
        <taxon>Betaproteobacteria</taxon>
        <taxon>Neisseriales</taxon>
        <taxon>Neisseriaceae</taxon>
        <taxon>Neisseria</taxon>
    </lineage>
</organism>
<keyword id="KW-0460">Magnesium</keyword>
<keyword id="KW-0479">Metal-binding</keyword>
<keyword id="KW-0808">Transferase</keyword>
<protein>
    <recommendedName>
        <fullName evidence="1">Isoprenyl transferase</fullName>
        <ecNumber evidence="1">2.5.1.-</ecNumber>
    </recommendedName>
</protein>
<feature type="chain" id="PRO_0000123643" description="Isoprenyl transferase">
    <location>
        <begin position="1"/>
        <end position="248"/>
    </location>
</feature>
<feature type="active site" evidence="1">
    <location>
        <position position="23"/>
    </location>
</feature>
<feature type="active site" description="Proton acceptor" evidence="1">
    <location>
        <position position="71"/>
    </location>
</feature>
<feature type="binding site" evidence="1">
    <location>
        <position position="23"/>
    </location>
    <ligand>
        <name>Mg(2+)</name>
        <dbReference type="ChEBI" id="CHEBI:18420"/>
    </ligand>
</feature>
<feature type="binding site" evidence="1">
    <location>
        <begin position="24"/>
        <end position="27"/>
    </location>
    <ligand>
        <name>substrate</name>
    </ligand>
</feature>
<feature type="binding site" evidence="1">
    <location>
        <position position="28"/>
    </location>
    <ligand>
        <name>substrate</name>
    </ligand>
</feature>
<feature type="binding site" evidence="1">
    <location>
        <position position="36"/>
    </location>
    <ligand>
        <name>substrate</name>
    </ligand>
</feature>
<feature type="binding site" evidence="1">
    <location>
        <position position="40"/>
    </location>
    <ligand>
        <name>substrate</name>
    </ligand>
</feature>
<feature type="binding site" evidence="1">
    <location>
        <begin position="68"/>
        <end position="70"/>
    </location>
    <ligand>
        <name>substrate</name>
    </ligand>
</feature>
<feature type="binding site" evidence="1">
    <location>
        <position position="72"/>
    </location>
    <ligand>
        <name>substrate</name>
    </ligand>
</feature>
<feature type="binding site" evidence="1">
    <location>
        <position position="74"/>
    </location>
    <ligand>
        <name>substrate</name>
    </ligand>
</feature>
<feature type="binding site" evidence="1">
    <location>
        <position position="185"/>
    </location>
    <ligand>
        <name>substrate</name>
    </ligand>
</feature>
<feature type="binding site" evidence="1">
    <location>
        <begin position="191"/>
        <end position="193"/>
    </location>
    <ligand>
        <name>substrate</name>
    </ligand>
</feature>
<feature type="binding site" evidence="1">
    <location>
        <position position="204"/>
    </location>
    <ligand>
        <name>Mg(2+)</name>
        <dbReference type="ChEBI" id="CHEBI:18420"/>
    </ligand>
</feature>
<accession>Q9JX35</accession>
<accession>A1INU3</accession>
<proteinExistence type="inferred from homology"/>
<name>ISPT_NEIMA</name>
<reference key="1">
    <citation type="journal article" date="2000" name="Nature">
        <title>Complete DNA sequence of a serogroup A strain of Neisseria meningitidis Z2491.</title>
        <authorList>
            <person name="Parkhill J."/>
            <person name="Achtman M."/>
            <person name="James K.D."/>
            <person name="Bentley S.D."/>
            <person name="Churcher C.M."/>
            <person name="Klee S.R."/>
            <person name="Morelli G."/>
            <person name="Basham D."/>
            <person name="Brown D."/>
            <person name="Chillingworth T."/>
            <person name="Davies R.M."/>
            <person name="Davis P."/>
            <person name="Devlin K."/>
            <person name="Feltwell T."/>
            <person name="Hamlin N."/>
            <person name="Holroyd S."/>
            <person name="Jagels K."/>
            <person name="Leather S."/>
            <person name="Moule S."/>
            <person name="Mungall K.L."/>
            <person name="Quail M.A."/>
            <person name="Rajandream M.A."/>
            <person name="Rutherford K.M."/>
            <person name="Simmonds M."/>
            <person name="Skelton J."/>
            <person name="Whitehead S."/>
            <person name="Spratt B.G."/>
            <person name="Barrell B.G."/>
        </authorList>
    </citation>
    <scope>NUCLEOTIDE SEQUENCE [LARGE SCALE GENOMIC DNA]</scope>
    <source>
        <strain>DSM 15465 / Z2491</strain>
    </source>
</reference>